<reference key="1">
    <citation type="journal article" date="2007" name="J. Bacteriol.">
        <title>The complete genome sequence of Bacillus thuringiensis Al Hakam.</title>
        <authorList>
            <person name="Challacombe J.F."/>
            <person name="Altherr M.R."/>
            <person name="Xie G."/>
            <person name="Bhotika S.S."/>
            <person name="Brown N."/>
            <person name="Bruce D."/>
            <person name="Campbell C.S."/>
            <person name="Campbell M.L."/>
            <person name="Chen J."/>
            <person name="Chertkov O."/>
            <person name="Cleland C."/>
            <person name="Dimitrijevic M."/>
            <person name="Doggett N.A."/>
            <person name="Fawcett J.J."/>
            <person name="Glavina T."/>
            <person name="Goodwin L.A."/>
            <person name="Green L.D."/>
            <person name="Han C.S."/>
            <person name="Hill K.K."/>
            <person name="Hitchcock P."/>
            <person name="Jackson P.J."/>
            <person name="Keim P."/>
            <person name="Kewalramani A.R."/>
            <person name="Longmire J."/>
            <person name="Lucas S."/>
            <person name="Malfatti S."/>
            <person name="Martinez D."/>
            <person name="McMurry K."/>
            <person name="Meincke L.J."/>
            <person name="Misra M."/>
            <person name="Moseman B.L."/>
            <person name="Mundt M."/>
            <person name="Munk A.C."/>
            <person name="Okinaka R.T."/>
            <person name="Parson-Quintana B."/>
            <person name="Reilly L.P."/>
            <person name="Richardson P."/>
            <person name="Robinson D.L."/>
            <person name="Saunders E."/>
            <person name="Tapia R."/>
            <person name="Tesmer J.G."/>
            <person name="Thayer N."/>
            <person name="Thompson L.S."/>
            <person name="Tice H."/>
            <person name="Ticknor L.O."/>
            <person name="Wills P.L."/>
            <person name="Gilna P."/>
            <person name="Brettin T.S."/>
        </authorList>
    </citation>
    <scope>NUCLEOTIDE SEQUENCE [LARGE SCALE GENOMIC DNA]</scope>
    <source>
        <strain>Al Hakam</strain>
    </source>
</reference>
<gene>
    <name evidence="1" type="primary">rpsJ</name>
    <name type="ordered locus">BALH_0107</name>
</gene>
<comment type="function">
    <text evidence="1">Involved in the binding of tRNA to the ribosomes.</text>
</comment>
<comment type="subunit">
    <text evidence="1">Part of the 30S ribosomal subunit.</text>
</comment>
<comment type="similarity">
    <text evidence="1">Belongs to the universal ribosomal protein uS10 family.</text>
</comment>
<accession>A0R8H9</accession>
<keyword id="KW-0687">Ribonucleoprotein</keyword>
<keyword id="KW-0689">Ribosomal protein</keyword>
<proteinExistence type="inferred from homology"/>
<name>RS10_BACAH</name>
<evidence type="ECO:0000255" key="1">
    <source>
        <dbReference type="HAMAP-Rule" id="MF_00508"/>
    </source>
</evidence>
<evidence type="ECO:0000305" key="2"/>
<sequence>MAKEKIRIRLKAYDHRILDQSAEKIVETAKRSGATVSGPIPLPTEKTVYTILRAVHKYKDSREQFEMRTHKRLIDIVSPTPQTVDSLMRLDLPSGVDIEIKL</sequence>
<dbReference type="EMBL" id="CP000485">
    <property type="protein sequence ID" value="ABK83522.1"/>
    <property type="molecule type" value="Genomic_DNA"/>
</dbReference>
<dbReference type="RefSeq" id="WP_001040596.1">
    <property type="nucleotide sequence ID" value="NC_008600.1"/>
</dbReference>
<dbReference type="SMR" id="A0R8H9"/>
<dbReference type="GeneID" id="93010944"/>
<dbReference type="KEGG" id="btl:BALH_0107"/>
<dbReference type="HOGENOM" id="CLU_122625_1_3_9"/>
<dbReference type="GO" id="GO:1990904">
    <property type="term" value="C:ribonucleoprotein complex"/>
    <property type="evidence" value="ECO:0007669"/>
    <property type="project" value="UniProtKB-KW"/>
</dbReference>
<dbReference type="GO" id="GO:0005840">
    <property type="term" value="C:ribosome"/>
    <property type="evidence" value="ECO:0007669"/>
    <property type="project" value="UniProtKB-KW"/>
</dbReference>
<dbReference type="GO" id="GO:0003735">
    <property type="term" value="F:structural constituent of ribosome"/>
    <property type="evidence" value="ECO:0007669"/>
    <property type="project" value="InterPro"/>
</dbReference>
<dbReference type="GO" id="GO:0000049">
    <property type="term" value="F:tRNA binding"/>
    <property type="evidence" value="ECO:0007669"/>
    <property type="project" value="UniProtKB-UniRule"/>
</dbReference>
<dbReference type="GO" id="GO:0006412">
    <property type="term" value="P:translation"/>
    <property type="evidence" value="ECO:0007669"/>
    <property type="project" value="UniProtKB-UniRule"/>
</dbReference>
<dbReference type="FunFam" id="3.30.70.600:FF:000001">
    <property type="entry name" value="30S ribosomal protein S10"/>
    <property type="match status" value="1"/>
</dbReference>
<dbReference type="Gene3D" id="3.30.70.600">
    <property type="entry name" value="Ribosomal protein S10 domain"/>
    <property type="match status" value="1"/>
</dbReference>
<dbReference type="HAMAP" id="MF_00508">
    <property type="entry name" value="Ribosomal_uS10"/>
    <property type="match status" value="1"/>
</dbReference>
<dbReference type="InterPro" id="IPR001848">
    <property type="entry name" value="Ribosomal_uS10"/>
</dbReference>
<dbReference type="InterPro" id="IPR018268">
    <property type="entry name" value="Ribosomal_uS10_CS"/>
</dbReference>
<dbReference type="InterPro" id="IPR027486">
    <property type="entry name" value="Ribosomal_uS10_dom"/>
</dbReference>
<dbReference type="InterPro" id="IPR036838">
    <property type="entry name" value="Ribosomal_uS10_dom_sf"/>
</dbReference>
<dbReference type="NCBIfam" id="NF001861">
    <property type="entry name" value="PRK00596.1"/>
    <property type="match status" value="1"/>
</dbReference>
<dbReference type="NCBIfam" id="TIGR01049">
    <property type="entry name" value="rpsJ_bact"/>
    <property type="match status" value="1"/>
</dbReference>
<dbReference type="PANTHER" id="PTHR11700">
    <property type="entry name" value="30S RIBOSOMAL PROTEIN S10 FAMILY MEMBER"/>
    <property type="match status" value="1"/>
</dbReference>
<dbReference type="Pfam" id="PF00338">
    <property type="entry name" value="Ribosomal_S10"/>
    <property type="match status" value="1"/>
</dbReference>
<dbReference type="PRINTS" id="PR00971">
    <property type="entry name" value="RIBOSOMALS10"/>
</dbReference>
<dbReference type="SMART" id="SM01403">
    <property type="entry name" value="Ribosomal_S10"/>
    <property type="match status" value="1"/>
</dbReference>
<dbReference type="SUPFAM" id="SSF54999">
    <property type="entry name" value="Ribosomal protein S10"/>
    <property type="match status" value="1"/>
</dbReference>
<dbReference type="PROSITE" id="PS00361">
    <property type="entry name" value="RIBOSOMAL_S10"/>
    <property type="match status" value="1"/>
</dbReference>
<protein>
    <recommendedName>
        <fullName evidence="1">Small ribosomal subunit protein uS10</fullName>
    </recommendedName>
    <alternativeName>
        <fullName evidence="2">30S ribosomal protein S10</fullName>
    </alternativeName>
</protein>
<organism>
    <name type="scientific">Bacillus thuringiensis (strain Al Hakam)</name>
    <dbReference type="NCBI Taxonomy" id="412694"/>
    <lineage>
        <taxon>Bacteria</taxon>
        <taxon>Bacillati</taxon>
        <taxon>Bacillota</taxon>
        <taxon>Bacilli</taxon>
        <taxon>Bacillales</taxon>
        <taxon>Bacillaceae</taxon>
        <taxon>Bacillus</taxon>
        <taxon>Bacillus cereus group</taxon>
    </lineage>
</organism>
<feature type="chain" id="PRO_1000014987" description="Small ribosomal subunit protein uS10">
    <location>
        <begin position="1"/>
        <end position="102"/>
    </location>
</feature>